<sequence>MYVSYLLDKDVSMYPSSVRHSGGLNLAPQNFVSPPQYPDYGGYHVAAAAAAAANLDSAQSPGPSWSTAYGAPLREDWNGYPPGGAAAANAVAHGLNGGSPAAAMGYSSPADYHAHHHPHHHPHHPAAAPSCASGLLQTLNPGPPGPAATGAAEQLSPSGQRRNLCEWMRKPAQPSLGSQVKTRTKDKYRVVYTDHQRLELEKEFHYSRYITIRRKAELAATLGLSERQVKIWFQNRRAKERKINKKKLQQQQQQQQQQQLASPPPQPSQPQPGSLRSVPEPLSPVSSLQGSVPGSVPGVLGPAGGVLNPTVTQ</sequence>
<organism>
    <name type="scientific">Mesocricetus auratus</name>
    <name type="common">Golden hamster</name>
    <dbReference type="NCBI Taxonomy" id="10036"/>
    <lineage>
        <taxon>Eukaryota</taxon>
        <taxon>Metazoa</taxon>
        <taxon>Chordata</taxon>
        <taxon>Craniata</taxon>
        <taxon>Vertebrata</taxon>
        <taxon>Euteleostomi</taxon>
        <taxon>Mammalia</taxon>
        <taxon>Eutheria</taxon>
        <taxon>Euarchontoglires</taxon>
        <taxon>Glires</taxon>
        <taxon>Rodentia</taxon>
        <taxon>Myomorpha</taxon>
        <taxon>Muroidea</taxon>
        <taxon>Cricetidae</taxon>
        <taxon>Cricetinae</taxon>
        <taxon>Mesocricetus</taxon>
    </lineage>
</organism>
<evidence type="ECO:0000250" key="1">
    <source>
        <dbReference type="UniProtKB" id="P43241"/>
    </source>
</evidence>
<evidence type="ECO:0000250" key="2">
    <source>
        <dbReference type="UniProtKB" id="Q99626"/>
    </source>
</evidence>
<evidence type="ECO:0000255" key="3">
    <source>
        <dbReference type="PROSITE-ProRule" id="PRU00108"/>
    </source>
</evidence>
<evidence type="ECO:0000256" key="4">
    <source>
        <dbReference type="SAM" id="MobiDB-lite"/>
    </source>
</evidence>
<evidence type="ECO:0000269" key="5">
    <source>
    </source>
</evidence>
<evidence type="ECO:0000269" key="6">
    <source>
    </source>
</evidence>
<evidence type="ECO:0000305" key="7"/>
<keyword id="KW-0010">Activator</keyword>
<keyword id="KW-0217">Developmental protein</keyword>
<keyword id="KW-0238">DNA-binding</keyword>
<keyword id="KW-0371">Homeobox</keyword>
<keyword id="KW-0539">Nucleus</keyword>
<keyword id="KW-0597">Phosphoprotein</keyword>
<keyword id="KW-1185">Reference proteome</keyword>
<keyword id="KW-0804">Transcription</keyword>
<keyword id="KW-0805">Transcription regulation</keyword>
<keyword id="KW-0832">Ubl conjugation</keyword>
<proteinExistence type="evidence at transcript level"/>
<feature type="chain" id="PRO_0000048850" description="Homeobox protein CDX-2">
    <location>
        <begin position="1"/>
        <end position="313"/>
    </location>
</feature>
<feature type="DNA-binding region" description="Homeobox" evidence="3">
    <location>
        <begin position="185"/>
        <end position="244"/>
    </location>
</feature>
<feature type="region of interest" description="Disordered" evidence="4">
    <location>
        <begin position="113"/>
        <end position="153"/>
    </location>
</feature>
<feature type="region of interest" description="Interaction with DNA" evidence="2">
    <location>
        <begin position="185"/>
        <end position="215"/>
    </location>
</feature>
<feature type="region of interest" description="Interaction with 5-mCpG DNA" evidence="2">
    <location>
        <begin position="227"/>
        <end position="241"/>
    </location>
</feature>
<feature type="region of interest" description="Disordered" evidence="4">
    <location>
        <begin position="242"/>
        <end position="313"/>
    </location>
</feature>
<feature type="short sequence motif" description="4S motif; modulates transactivation activity and protein stability" evidence="1">
    <location>
        <begin position="283"/>
        <end position="295"/>
    </location>
</feature>
<feature type="compositionally biased region" description="Basic residues" evidence="4">
    <location>
        <begin position="114"/>
        <end position="124"/>
    </location>
</feature>
<feature type="compositionally biased region" description="Low complexity" evidence="4">
    <location>
        <begin position="249"/>
        <end position="261"/>
    </location>
</feature>
<feature type="compositionally biased region" description="Low complexity" evidence="4">
    <location>
        <begin position="271"/>
        <end position="300"/>
    </location>
</feature>
<feature type="modified residue" description="Phosphoserine" evidence="1">
    <location>
        <position position="60"/>
    </location>
</feature>
<feature type="modified residue" description="Phosphoserine" evidence="1">
    <location>
        <position position="283"/>
    </location>
</feature>
<gene>
    <name type="primary">CDX2</name>
    <name type="synonym">CDX-3</name>
    <name type="synonym">CDX3</name>
</gene>
<protein>
    <recommendedName>
        <fullName>Homeobox protein CDX-2</fullName>
    </recommendedName>
    <alternativeName>
        <fullName>Caudal-type homeobox protein 2</fullName>
    </alternativeName>
</protein>
<accession>Q04649</accession>
<reference key="1">
    <citation type="journal article" date="1992" name="Genes Dev.">
        <title>Synergistic activation of the insulin gene by a LIM-homeo domain protein and a basic helix-loop-helix protein: building a functional insulin minienhancer complex.</title>
        <authorList>
            <person name="German M.S."/>
            <person name="Wang J."/>
            <person name="Chadwick R.B."/>
            <person name="Rutter W.J."/>
        </authorList>
    </citation>
    <scope>NUCLEOTIDE SEQUENCE [MRNA]</scope>
    <scope>FUNCTION</scope>
    <scope>TISSUE SPECIFICITY</scope>
</reference>
<reference key="2">
    <citation type="journal article" date="1997" name="Biochem. J.">
        <title>Regulation of lactase-phlorizin hydrolase gene expression by the caudal-related homoeodomain protein Cdx-2.</title>
        <authorList>
            <person name="Troelsen J.T."/>
            <person name="Mitchelmore C."/>
            <person name="Spodsberg N."/>
            <person name="Jensen A.M."/>
            <person name="Noren O."/>
            <person name="Sjoestroem H."/>
        </authorList>
    </citation>
    <scope>FUNCTION</scope>
</reference>
<dbReference type="EMBL" id="X81404">
    <property type="protein sequence ID" value="CAA57162.1"/>
    <property type="molecule type" value="mRNA"/>
</dbReference>
<dbReference type="PIR" id="A46233">
    <property type="entry name" value="A46233"/>
</dbReference>
<dbReference type="RefSeq" id="NP_001268630.1">
    <property type="nucleotide sequence ID" value="NM_001281701.1"/>
</dbReference>
<dbReference type="SMR" id="Q04649"/>
<dbReference type="STRING" id="10036.ENSMAUP00000023761"/>
<dbReference type="Ensembl" id="ENSMAUT00000027774">
    <property type="protein sequence ID" value="ENSMAUP00000023761"/>
    <property type="gene ID" value="ENSMAUG00000020822"/>
</dbReference>
<dbReference type="GeneID" id="101841392"/>
<dbReference type="KEGG" id="maua:101841392"/>
<dbReference type="CTD" id="1045"/>
<dbReference type="eggNOG" id="KOG0848">
    <property type="taxonomic scope" value="Eukaryota"/>
</dbReference>
<dbReference type="OrthoDB" id="6159439at2759"/>
<dbReference type="Proteomes" id="UP000189706">
    <property type="component" value="Unplaced"/>
</dbReference>
<dbReference type="GO" id="GO:0000794">
    <property type="term" value="C:condensed nuclear chromosome"/>
    <property type="evidence" value="ECO:0007669"/>
    <property type="project" value="Ensembl"/>
</dbReference>
<dbReference type="GO" id="GO:0005654">
    <property type="term" value="C:nucleoplasm"/>
    <property type="evidence" value="ECO:0007669"/>
    <property type="project" value="Ensembl"/>
</dbReference>
<dbReference type="GO" id="GO:0017053">
    <property type="term" value="C:transcription repressor complex"/>
    <property type="evidence" value="ECO:0007669"/>
    <property type="project" value="Ensembl"/>
</dbReference>
<dbReference type="GO" id="GO:0003700">
    <property type="term" value="F:DNA-binding transcription factor activity"/>
    <property type="evidence" value="ECO:0000250"/>
    <property type="project" value="UniProtKB"/>
</dbReference>
<dbReference type="GO" id="GO:0001227">
    <property type="term" value="F:DNA-binding transcription repressor activity, RNA polymerase II-specific"/>
    <property type="evidence" value="ECO:0007669"/>
    <property type="project" value="Ensembl"/>
</dbReference>
<dbReference type="GO" id="GO:0008327">
    <property type="term" value="F:methyl-CpG binding"/>
    <property type="evidence" value="ECO:0000250"/>
    <property type="project" value="UniProtKB"/>
</dbReference>
<dbReference type="GO" id="GO:0000978">
    <property type="term" value="F:RNA polymerase II cis-regulatory region sequence-specific DNA binding"/>
    <property type="evidence" value="ECO:0000250"/>
    <property type="project" value="UniProtKB"/>
</dbReference>
<dbReference type="GO" id="GO:0009887">
    <property type="term" value="P:animal organ morphogenesis"/>
    <property type="evidence" value="ECO:0007669"/>
    <property type="project" value="TreeGrafter"/>
</dbReference>
<dbReference type="GO" id="GO:0009948">
    <property type="term" value="P:anterior/posterior axis specification"/>
    <property type="evidence" value="ECO:0007669"/>
    <property type="project" value="TreeGrafter"/>
</dbReference>
<dbReference type="GO" id="GO:0001568">
    <property type="term" value="P:blood vessel development"/>
    <property type="evidence" value="ECO:0007669"/>
    <property type="project" value="Ensembl"/>
</dbReference>
<dbReference type="GO" id="GO:0008333">
    <property type="term" value="P:endosome to lysosome transport"/>
    <property type="evidence" value="ECO:0007669"/>
    <property type="project" value="Ensembl"/>
</dbReference>
<dbReference type="GO" id="GO:0045197">
    <property type="term" value="P:establishment or maintenance of epithelial cell apical/basal polarity"/>
    <property type="evidence" value="ECO:0007669"/>
    <property type="project" value="Ensembl"/>
</dbReference>
<dbReference type="GO" id="GO:0060575">
    <property type="term" value="P:intestinal epithelial cell differentiation"/>
    <property type="evidence" value="ECO:0000250"/>
    <property type="project" value="UniProtKB"/>
</dbReference>
<dbReference type="GO" id="GO:0060711">
    <property type="term" value="P:labyrinthine layer development"/>
    <property type="evidence" value="ECO:0007669"/>
    <property type="project" value="Ensembl"/>
</dbReference>
<dbReference type="GO" id="GO:0045597">
    <property type="term" value="P:positive regulation of cell differentiation"/>
    <property type="evidence" value="ECO:0007669"/>
    <property type="project" value="Ensembl"/>
</dbReference>
<dbReference type="GO" id="GO:0045944">
    <property type="term" value="P:positive regulation of transcription by RNA polymerase II"/>
    <property type="evidence" value="ECO:0000250"/>
    <property type="project" value="UniProtKB"/>
</dbReference>
<dbReference type="GO" id="GO:0014807">
    <property type="term" value="P:regulation of somitogenesis"/>
    <property type="evidence" value="ECO:0000250"/>
    <property type="project" value="UniProtKB"/>
</dbReference>
<dbReference type="GO" id="GO:0035019">
    <property type="term" value="P:somatic stem cell population maintenance"/>
    <property type="evidence" value="ECO:0007669"/>
    <property type="project" value="Ensembl"/>
</dbReference>
<dbReference type="GO" id="GO:0048863">
    <property type="term" value="P:stem cell differentiation"/>
    <property type="evidence" value="ECO:0007669"/>
    <property type="project" value="Ensembl"/>
</dbReference>
<dbReference type="GO" id="GO:0001829">
    <property type="term" value="P:trophectodermal cell differentiation"/>
    <property type="evidence" value="ECO:0007669"/>
    <property type="project" value="Ensembl"/>
</dbReference>
<dbReference type="CDD" id="cd00086">
    <property type="entry name" value="homeodomain"/>
    <property type="match status" value="1"/>
</dbReference>
<dbReference type="FunFam" id="1.10.10.60:FF:000089">
    <property type="entry name" value="Caudal type homeobox 4"/>
    <property type="match status" value="1"/>
</dbReference>
<dbReference type="Gene3D" id="1.10.10.60">
    <property type="entry name" value="Homeodomain-like"/>
    <property type="match status" value="1"/>
</dbReference>
<dbReference type="InterPro" id="IPR006820">
    <property type="entry name" value="Caudal_activation_dom"/>
</dbReference>
<dbReference type="InterPro" id="IPR047152">
    <property type="entry name" value="Caudal_homeobox"/>
</dbReference>
<dbReference type="InterPro" id="IPR001356">
    <property type="entry name" value="HD"/>
</dbReference>
<dbReference type="InterPro" id="IPR020479">
    <property type="entry name" value="HD_metazoa"/>
</dbReference>
<dbReference type="InterPro" id="IPR017970">
    <property type="entry name" value="Homeobox_CS"/>
</dbReference>
<dbReference type="InterPro" id="IPR009057">
    <property type="entry name" value="Homeodomain-like_sf"/>
</dbReference>
<dbReference type="InterPro" id="IPR000047">
    <property type="entry name" value="HTH_motif"/>
</dbReference>
<dbReference type="PANTHER" id="PTHR24332">
    <property type="entry name" value="HOMEOBOX PROTEIN CDX"/>
    <property type="match status" value="1"/>
</dbReference>
<dbReference type="PANTHER" id="PTHR24332:SF27">
    <property type="entry name" value="HOMEOBOX PROTEIN CDX-2"/>
    <property type="match status" value="1"/>
</dbReference>
<dbReference type="Pfam" id="PF04731">
    <property type="entry name" value="Caudal_act"/>
    <property type="match status" value="1"/>
</dbReference>
<dbReference type="Pfam" id="PF00046">
    <property type="entry name" value="Homeodomain"/>
    <property type="match status" value="1"/>
</dbReference>
<dbReference type="PRINTS" id="PR00024">
    <property type="entry name" value="HOMEOBOX"/>
</dbReference>
<dbReference type="PRINTS" id="PR00031">
    <property type="entry name" value="HTHREPRESSR"/>
</dbReference>
<dbReference type="SMART" id="SM00389">
    <property type="entry name" value="HOX"/>
    <property type="match status" value="1"/>
</dbReference>
<dbReference type="SUPFAM" id="SSF46689">
    <property type="entry name" value="Homeodomain-like"/>
    <property type="match status" value="1"/>
</dbReference>
<dbReference type="PROSITE" id="PS00027">
    <property type="entry name" value="HOMEOBOX_1"/>
    <property type="match status" value="1"/>
</dbReference>
<dbReference type="PROSITE" id="PS50071">
    <property type="entry name" value="HOMEOBOX_2"/>
    <property type="match status" value="1"/>
</dbReference>
<comment type="function">
    <text evidence="1 2 5 6">Transcription factor which regulates the transcription of multiple genes expressed in the intestinal epithelium (PubMed:1358758). Binds to the promoter of the intestinal sucrase-isomaltase SI and activates SI transcription (By similarity). Binds to the DNA sequence 5'-ATAAAAACTTAT-3' in the promoter region of VDR and activates VDR transcription (By similarity). Binds to and activates transcription of LPH (PubMed:9148757). Activates transcription of CLDN2 and intestinal mucin MUC2 (By similarity). Binds to the 5'-AATTTTTTACAACACCT-3' DNA sequence in the promoter region of CA1 and activates CA1 transcription (By similarity). Important in broad range of functions from early differentiation to maintenance of the intestinal epithelial lining of both the small and large intestine. Binds preferentially to methylated DNA (By similarity).</text>
</comment>
<comment type="subunit">
    <text evidence="1">Can bind DNA as a monomer or homodimer.</text>
</comment>
<comment type="subcellular location">
    <subcellularLocation>
        <location evidence="1">Nucleus</location>
    </subcellularLocation>
</comment>
<comment type="tissue specificity">
    <text evidence="5">Expressed in the intestine.</text>
</comment>
<comment type="PTM">
    <text evidence="1">Ubiquitinated, leading to its degradation by the proteasome.</text>
</comment>
<comment type="PTM">
    <text evidence="1">Phosphorylation at Ser-60 reduces transactivation capacity. Phosphorylation at Ser-283 reduces transactivation capacity and also increases ubiquitin-dependent proteasome degradation.</text>
</comment>
<comment type="similarity">
    <text evidence="7">Belongs to the Caudal homeobox family.</text>
</comment>
<name>CDX2_MESAU</name>